<protein>
    <recommendedName>
        <fullName>Protein krueppel</fullName>
    </recommendedName>
</protein>
<gene>
    <name type="primary">Kr</name>
</gene>
<keyword id="KW-0217">Developmental protein</keyword>
<keyword id="KW-0238">DNA-binding</keyword>
<keyword id="KW-0302">Gap protein</keyword>
<keyword id="KW-0479">Metal-binding</keyword>
<keyword id="KW-0539">Nucleus</keyword>
<keyword id="KW-0677">Repeat</keyword>
<keyword id="KW-0862">Zinc</keyword>
<keyword id="KW-0863">Zinc-finger</keyword>
<feature type="chain" id="PRO_0000046995" description="Protein krueppel">
    <location>
        <begin position="1" status="less than"/>
        <end position="74" status="greater than"/>
    </location>
</feature>
<feature type="zinc finger region" description="C2H2-type 1" evidence="1">
    <location>
        <begin position="1" status="less than"/>
        <end position="4"/>
    </location>
</feature>
<feature type="zinc finger region" description="C2H2-type 2" evidence="1">
    <location>
        <begin position="10"/>
        <end position="32"/>
    </location>
</feature>
<feature type="zinc finger region" description="C2H2-type 3" evidence="1">
    <location>
        <begin position="38"/>
        <end position="60"/>
    </location>
</feature>
<feature type="zinc finger region" description="C2H2-type 4" evidence="1">
    <location>
        <begin position="66"/>
        <end position="74" status="greater than"/>
    </location>
</feature>
<feature type="non-terminal residue">
    <location>
        <position position="1"/>
    </location>
</feature>
<feature type="non-terminal residue">
    <location>
        <position position="74"/>
    </location>
</feature>
<dbReference type="EMBL" id="L01596">
    <property type="protein sequence ID" value="AAA29121.1"/>
    <property type="molecule type" value="Genomic_DNA"/>
</dbReference>
<dbReference type="SMR" id="Q01871"/>
<dbReference type="GO" id="GO:0005634">
    <property type="term" value="C:nucleus"/>
    <property type="evidence" value="ECO:0007669"/>
    <property type="project" value="UniProtKB-SubCell"/>
</dbReference>
<dbReference type="GO" id="GO:0003677">
    <property type="term" value="F:DNA binding"/>
    <property type="evidence" value="ECO:0007669"/>
    <property type="project" value="UniProtKB-KW"/>
</dbReference>
<dbReference type="GO" id="GO:0000981">
    <property type="term" value="F:DNA-binding transcription factor activity, RNA polymerase II-specific"/>
    <property type="evidence" value="ECO:0007669"/>
    <property type="project" value="TreeGrafter"/>
</dbReference>
<dbReference type="GO" id="GO:0008270">
    <property type="term" value="F:zinc ion binding"/>
    <property type="evidence" value="ECO:0007669"/>
    <property type="project" value="UniProtKB-KW"/>
</dbReference>
<dbReference type="GO" id="GO:0035282">
    <property type="term" value="P:segmentation"/>
    <property type="evidence" value="ECO:0007669"/>
    <property type="project" value="UniProtKB-KW"/>
</dbReference>
<dbReference type="FunFam" id="3.30.160.60:FF:000912">
    <property type="entry name" value="Zinc finger protein 660"/>
    <property type="match status" value="2"/>
</dbReference>
<dbReference type="Gene3D" id="3.30.160.60">
    <property type="entry name" value="Classic Zinc Finger"/>
    <property type="match status" value="3"/>
</dbReference>
<dbReference type="InterPro" id="IPR036236">
    <property type="entry name" value="Znf_C2H2_sf"/>
</dbReference>
<dbReference type="InterPro" id="IPR013087">
    <property type="entry name" value="Znf_C2H2_type"/>
</dbReference>
<dbReference type="PANTHER" id="PTHR24394">
    <property type="entry name" value="ZINC FINGER PROTEIN"/>
    <property type="match status" value="1"/>
</dbReference>
<dbReference type="PANTHER" id="PTHR24394:SF44">
    <property type="entry name" value="ZINC FINGER PROTEIN 271-LIKE"/>
    <property type="match status" value="1"/>
</dbReference>
<dbReference type="Pfam" id="PF00096">
    <property type="entry name" value="zf-C2H2"/>
    <property type="match status" value="2"/>
</dbReference>
<dbReference type="SMART" id="SM00355">
    <property type="entry name" value="ZnF_C2H2"/>
    <property type="match status" value="2"/>
</dbReference>
<dbReference type="SUPFAM" id="SSF57667">
    <property type="entry name" value="beta-beta-alpha zinc fingers"/>
    <property type="match status" value="1"/>
</dbReference>
<dbReference type="PROSITE" id="PS00028">
    <property type="entry name" value="ZINC_FINGER_C2H2_1"/>
    <property type="match status" value="2"/>
</dbReference>
<dbReference type="PROSITE" id="PS50157">
    <property type="entry name" value="ZINC_FINGER_C2H2_2"/>
    <property type="match status" value="2"/>
</dbReference>
<reference key="1">
    <citation type="journal article" date="1992" name="Proc. Natl. Acad. Sci. U.S.A.">
        <title>Evolutionary conservation pattern of zinc-finger domains of Drosophila segmentation genes.</title>
        <authorList>
            <person name="Sommer R.J."/>
            <person name="Retzlaff M."/>
            <person name="Goerlich K."/>
            <person name="Sander K."/>
            <person name="Tautz D."/>
        </authorList>
    </citation>
    <scope>NUCLEOTIDE SEQUENCE [GENOMIC DNA]</scope>
</reference>
<comment type="function">
    <text>Krueppel is a gap class segmentation protein.</text>
</comment>
<comment type="subcellular location">
    <subcellularLocation>
        <location evidence="2">Nucleus</location>
    </subcellularLocation>
</comment>
<comment type="similarity">
    <text evidence="2">Belongs to the krueppel C2H2-type zinc-finger protein family.</text>
</comment>
<organism>
    <name type="scientific">Euscelis plebejus</name>
    <name type="common">Leafhopper</name>
    <dbReference type="NCBI Taxonomy" id="6827"/>
    <lineage>
        <taxon>Eukaryota</taxon>
        <taxon>Metazoa</taxon>
        <taxon>Ecdysozoa</taxon>
        <taxon>Arthropoda</taxon>
        <taxon>Hexapoda</taxon>
        <taxon>Insecta</taxon>
        <taxon>Pterygota</taxon>
        <taxon>Neoptera</taxon>
        <taxon>Paraneoptera</taxon>
        <taxon>Hemiptera</taxon>
        <taxon>Auchenorrhyncha</taxon>
        <taxon>Membracoidea</taxon>
        <taxon>Cicadellidae</taxon>
        <taxon>Deltocephalinae</taxon>
        <taxon>Athysanini</taxon>
        <taxon>Euscelis</taxon>
    </lineage>
</organism>
<accession>Q01871</accession>
<evidence type="ECO:0000255" key="1">
    <source>
        <dbReference type="PROSITE-ProRule" id="PRU00042"/>
    </source>
</evidence>
<evidence type="ECO:0000305" key="2"/>
<proteinExistence type="inferred from homology"/>
<sequence>ERTHTGEKPFECSQCHKRFTRDHHLKTHMRLHTGEKPYHCTHCDRHFVQVANLRRHLRVHTGERPYACELCASR</sequence>
<name>KRUP_EUSPL</name>